<gene>
    <name evidence="2" type="primary">DNPEP</name>
</gene>
<evidence type="ECO:0000250" key="1"/>
<evidence type="ECO:0000250" key="2">
    <source>
        <dbReference type="UniProtKB" id="Q9ULA0"/>
    </source>
</evidence>
<evidence type="ECO:0000305" key="3"/>
<reference key="1">
    <citation type="submission" date="2004-11" db="EMBL/GenBank/DDBJ databases">
        <authorList>
            <consortium name="The German cDNA consortium"/>
        </authorList>
    </citation>
    <scope>NUCLEOTIDE SEQUENCE [LARGE SCALE MRNA]</scope>
    <source>
        <tissue>Heart</tissue>
    </source>
</reference>
<name>DNPEP_PONAB</name>
<accession>Q5RBT2</accession>
<feature type="chain" id="PRO_0000284911" description="Aspartyl aminopeptidase">
    <location>
        <begin position="1"/>
        <end position="471"/>
    </location>
</feature>
<feature type="binding site" evidence="1">
    <location>
        <position position="90"/>
    </location>
    <ligand>
        <name>Zn(2+)</name>
        <dbReference type="ChEBI" id="CHEBI:29105"/>
        <label>1</label>
    </ligand>
</feature>
<feature type="binding site" evidence="1">
    <location>
        <position position="166"/>
    </location>
    <ligand>
        <name>substrate</name>
    </ligand>
</feature>
<feature type="binding site" evidence="1">
    <location>
        <position position="260"/>
    </location>
    <ligand>
        <name>Zn(2+)</name>
        <dbReference type="ChEBI" id="CHEBI:29105"/>
        <label>1</label>
    </ligand>
</feature>
<feature type="binding site" evidence="1">
    <location>
        <position position="260"/>
    </location>
    <ligand>
        <name>Zn(2+)</name>
        <dbReference type="ChEBI" id="CHEBI:29105"/>
        <label>2</label>
    </ligand>
</feature>
<feature type="binding site" evidence="1">
    <location>
        <position position="297"/>
    </location>
    <ligand>
        <name>substrate</name>
    </ligand>
</feature>
<feature type="binding site" evidence="1">
    <location>
        <position position="298"/>
    </location>
    <ligand>
        <name>Zn(2+)</name>
        <dbReference type="ChEBI" id="CHEBI:29105"/>
        <label>2</label>
    </ligand>
</feature>
<feature type="binding site" evidence="1">
    <location>
        <position position="342"/>
    </location>
    <ligand>
        <name>substrate</name>
    </ligand>
</feature>
<feature type="binding site" evidence="1">
    <location>
        <position position="342"/>
    </location>
    <ligand>
        <name>Zn(2+)</name>
        <dbReference type="ChEBI" id="CHEBI:29105"/>
        <label>1</label>
    </ligand>
</feature>
<feature type="binding site" evidence="1">
    <location>
        <position position="345"/>
    </location>
    <ligand>
        <name>substrate</name>
    </ligand>
</feature>
<feature type="binding site" evidence="1">
    <location>
        <position position="370"/>
    </location>
    <ligand>
        <name>substrate</name>
    </ligand>
</feature>
<feature type="binding site" evidence="1">
    <location>
        <position position="377"/>
    </location>
    <ligand>
        <name>substrate</name>
    </ligand>
</feature>
<feature type="binding site" evidence="1">
    <location>
        <position position="436"/>
    </location>
    <ligand>
        <name>Zn(2+)</name>
        <dbReference type="ChEBI" id="CHEBI:29105"/>
        <label>2</label>
    </ligand>
</feature>
<feature type="modified residue" description="Phosphothreonine" evidence="2">
    <location>
        <position position="199"/>
    </location>
</feature>
<comment type="function">
    <text evidence="1">Aminopeptidase with specificity towards an acidic amino acid at the N-terminus. Likely to play an important role in intracellular protein and peptide metabolism (By similarity).</text>
</comment>
<comment type="catalytic activity">
    <reaction>
        <text>Release of an N-terminal aspartate or glutamate from a peptide, with a preference for aspartate.</text>
        <dbReference type="EC" id="3.4.11.21"/>
    </reaction>
</comment>
<comment type="cofactor">
    <cofactor evidence="1">
        <name>Zn(2+)</name>
        <dbReference type="ChEBI" id="CHEBI:29105"/>
    </cofactor>
    <text evidence="1">Binds 2 Zn(2+) ions per subunit.</text>
</comment>
<comment type="activity regulation">
    <text evidence="1">One of the zinc ions is readily exchangeable with other divalent cations such as manganese, which strongly stimulates the enzymatic activity.</text>
</comment>
<comment type="subunit">
    <text evidence="1">Tetrahedron-shaped homododecamer built from six homodimers.</text>
</comment>
<comment type="subcellular location">
    <subcellularLocation>
        <location>Cytoplasm</location>
    </subcellularLocation>
</comment>
<comment type="similarity">
    <text evidence="3">Belongs to the peptidase M18 family.</text>
</comment>
<sequence>MNGKARQEAVQTAAKELLKFVNQGPSPFHAVAECRNRLLQAGFSELKETEKWNIKPESKYFMTRNSSTIIAFAVGGQYVPGNGFSLIGAHTDSPCLRVKRRSRRSQVGFQQVGVETYGGGIWSTWFDRDLTLAGRVIVKCPTSGRLEQRLVHVERPILRIPHLAIHLQRNINENFGPNTEMHLVPILATAIQEELEKGTPEPGPLNAMDERHHSVLMSLLCAHLGLSPKDIVEMELCLADTQPAVLGGAYDEFIFAPRLDNLHSCFCALQALIDSCAGPGSLATEPHVRMITLYDNEEVGSESAQGAQSLLTELVLRRISASCQHPTAFEEAIPKSFMISADMAHAVHPNYLDKHEENHRPLFHKGPVIKVNSKQRYASNAVSEALIREVANKVKVPLQDLMVRNDTPCGTTIGPILASRLGLRVLDLGSPQLAMHSIREMACTTGVLQTLTLFKGFFELFPSLSHNLLVD</sequence>
<organism>
    <name type="scientific">Pongo abelii</name>
    <name type="common">Sumatran orangutan</name>
    <name type="synonym">Pongo pygmaeus abelii</name>
    <dbReference type="NCBI Taxonomy" id="9601"/>
    <lineage>
        <taxon>Eukaryota</taxon>
        <taxon>Metazoa</taxon>
        <taxon>Chordata</taxon>
        <taxon>Craniata</taxon>
        <taxon>Vertebrata</taxon>
        <taxon>Euteleostomi</taxon>
        <taxon>Mammalia</taxon>
        <taxon>Eutheria</taxon>
        <taxon>Euarchontoglires</taxon>
        <taxon>Primates</taxon>
        <taxon>Haplorrhini</taxon>
        <taxon>Catarrhini</taxon>
        <taxon>Hominidae</taxon>
        <taxon>Pongo</taxon>
    </lineage>
</organism>
<proteinExistence type="evidence at transcript level"/>
<protein>
    <recommendedName>
        <fullName evidence="2">Aspartyl aminopeptidase</fullName>
        <ecNumber evidence="2">3.4.11.21</ecNumber>
    </recommendedName>
</protein>
<keyword id="KW-0031">Aminopeptidase</keyword>
<keyword id="KW-0963">Cytoplasm</keyword>
<keyword id="KW-0378">Hydrolase</keyword>
<keyword id="KW-0479">Metal-binding</keyword>
<keyword id="KW-0482">Metalloprotease</keyword>
<keyword id="KW-0597">Phosphoprotein</keyword>
<keyword id="KW-0645">Protease</keyword>
<keyword id="KW-1185">Reference proteome</keyword>
<keyword id="KW-0862">Zinc</keyword>
<dbReference type="EC" id="3.4.11.21" evidence="2"/>
<dbReference type="EMBL" id="CR858551">
    <property type="protein sequence ID" value="CAH90778.1"/>
    <property type="molecule type" value="mRNA"/>
</dbReference>
<dbReference type="RefSeq" id="NP_001125438.1">
    <property type="nucleotide sequence ID" value="NM_001131966.1"/>
</dbReference>
<dbReference type="SMR" id="Q5RBT2"/>
<dbReference type="STRING" id="9601.ENSPPYP00000014757"/>
<dbReference type="MEROPS" id="M18.002"/>
<dbReference type="GeneID" id="100172346"/>
<dbReference type="KEGG" id="pon:100172346"/>
<dbReference type="CTD" id="23549"/>
<dbReference type="eggNOG" id="KOG2596">
    <property type="taxonomic scope" value="Eukaryota"/>
</dbReference>
<dbReference type="InParanoid" id="Q5RBT2"/>
<dbReference type="OrthoDB" id="9880441at2759"/>
<dbReference type="Proteomes" id="UP000001595">
    <property type="component" value="Unplaced"/>
</dbReference>
<dbReference type="GO" id="GO:0005737">
    <property type="term" value="C:cytoplasm"/>
    <property type="evidence" value="ECO:0007669"/>
    <property type="project" value="UniProtKB-SubCell"/>
</dbReference>
<dbReference type="GO" id="GO:0004177">
    <property type="term" value="F:aminopeptidase activity"/>
    <property type="evidence" value="ECO:0007669"/>
    <property type="project" value="UniProtKB-KW"/>
</dbReference>
<dbReference type="GO" id="GO:0008237">
    <property type="term" value="F:metallopeptidase activity"/>
    <property type="evidence" value="ECO:0007669"/>
    <property type="project" value="UniProtKB-KW"/>
</dbReference>
<dbReference type="GO" id="GO:0008270">
    <property type="term" value="F:zinc ion binding"/>
    <property type="evidence" value="ECO:0007669"/>
    <property type="project" value="InterPro"/>
</dbReference>
<dbReference type="GO" id="GO:0006508">
    <property type="term" value="P:proteolysis"/>
    <property type="evidence" value="ECO:0007669"/>
    <property type="project" value="UniProtKB-KW"/>
</dbReference>
<dbReference type="CDD" id="cd05658">
    <property type="entry name" value="M18_DAP"/>
    <property type="match status" value="1"/>
</dbReference>
<dbReference type="FunFam" id="2.30.250.10:FF:000002">
    <property type="entry name" value="Aspartyl aminopeptidase"/>
    <property type="match status" value="1"/>
</dbReference>
<dbReference type="FunFam" id="3.40.630.10:FF:000152">
    <property type="entry name" value="aspartyl aminopeptidase isoform X2"/>
    <property type="match status" value="1"/>
</dbReference>
<dbReference type="Gene3D" id="2.30.250.10">
    <property type="entry name" value="Aminopeptidase i, Domain 2"/>
    <property type="match status" value="1"/>
</dbReference>
<dbReference type="Gene3D" id="3.40.630.10">
    <property type="entry name" value="Zn peptidases"/>
    <property type="match status" value="1"/>
</dbReference>
<dbReference type="InterPro" id="IPR001948">
    <property type="entry name" value="Peptidase_M18"/>
</dbReference>
<dbReference type="InterPro" id="IPR023358">
    <property type="entry name" value="Peptidase_M18_dom2"/>
</dbReference>
<dbReference type="NCBIfam" id="NF002759">
    <property type="entry name" value="PRK02813.1"/>
    <property type="match status" value="1"/>
</dbReference>
<dbReference type="PANTHER" id="PTHR28570">
    <property type="entry name" value="ASPARTYL AMINOPEPTIDASE"/>
    <property type="match status" value="1"/>
</dbReference>
<dbReference type="PANTHER" id="PTHR28570:SF3">
    <property type="entry name" value="ASPARTYL AMINOPEPTIDASE"/>
    <property type="match status" value="1"/>
</dbReference>
<dbReference type="Pfam" id="PF02127">
    <property type="entry name" value="Peptidase_M18"/>
    <property type="match status" value="1"/>
</dbReference>
<dbReference type="PRINTS" id="PR00932">
    <property type="entry name" value="AMINO1PTASE"/>
</dbReference>
<dbReference type="SUPFAM" id="SSF101821">
    <property type="entry name" value="Aminopeptidase/glucanase lid domain"/>
    <property type="match status" value="1"/>
</dbReference>
<dbReference type="SUPFAM" id="SSF53187">
    <property type="entry name" value="Zn-dependent exopeptidases"/>
    <property type="match status" value="1"/>
</dbReference>